<accession>Q09459</accession>
<accession>B6VQ42</accession>
<accession>B6VQ43</accession>
<accession>Q09513</accession>
<comment type="function">
    <text evidence="3 4">Thought to have an important role in cilia formation and cilia-mediated chemosensation. Involved in the docking of other MKS/MKSR proteins localized to the transition zone of the cilia.</text>
</comment>
<comment type="subcellular location">
    <subcellularLocation>
        <location evidence="4">Cell projection</location>
        <location evidence="4">Cilium</location>
    </subcellularLocation>
    <text>Localizes to the transition zone.</text>
</comment>
<comment type="alternative products">
    <event type="alternative splicing"/>
    <isoform>
        <id>Q09459-1</id>
        <name>a</name>
        <sequence type="displayed"/>
    </isoform>
    <isoform>
        <id>Q09459-2</id>
        <name>b</name>
        <sequence type="described" ref="VSP_038153"/>
    </isoform>
</comment>
<comment type="tissue specificity">
    <text evidence="3 4">Expressed at the transition zone at the base of cilia. Expressed in ciliated sensory neurons, including the amphid neurons in the head.</text>
</comment>
<comment type="disruption phenotype">
    <text evidence="3 4">Defective cilia sensory function. Abnormal dye filling (Dyf) in the ASI neuron and chemotaxis behavior. Shorter cilia lengths in a subset of ciliary neurons. Aberrant localization of other cilia-expressed proteins.</text>
</comment>
<comment type="miscellaneous">
    <text>An X-box element in the predicted promoter region was identified consistent with other cilia-related genes.</text>
</comment>
<comment type="similarity">
    <text evidence="5">Belongs to the RPGRIP1 family.</text>
</comment>
<reference key="1">
    <citation type="journal article" date="2011" name="Biochem. Biophys. Res. Commun.">
        <title>Caenorhabditis elegans ciliary protein NPHP-8, the homologue of human RPGRIP1L, is required for ciliogenesis and chemosensation.</title>
        <authorList>
            <person name="Liu L."/>
            <person name="Zhang M."/>
            <person name="Xia Z."/>
            <person name="Xu P."/>
            <person name="Chen L."/>
            <person name="Xu T."/>
        </authorList>
    </citation>
    <scope>NUCLEOTIDE SEQUENCE [MRNA] (ISOFORM A)</scope>
    <scope>FUNCTION</scope>
    <scope>TISSUE SPECIFICITY</scope>
    <scope>DISRUPTION PHENOTYPE</scope>
    <scope>SUBCELLULAR LOCATION</scope>
</reference>
<reference key="2">
    <citation type="journal article" date="1998" name="Science">
        <title>Genome sequence of the nematode C. elegans: a platform for investigating biology.</title>
        <authorList>
            <consortium name="The C. elegans sequencing consortium"/>
        </authorList>
    </citation>
    <scope>NUCLEOTIDE SEQUENCE [LARGE SCALE GENOMIC DNA]</scope>
    <scope>ALTERNATIVE SPLICING</scope>
    <source>
        <strain>Bristol N2</strain>
    </source>
</reference>
<reference key="3">
    <citation type="journal article" date="2011" name="J. Cell Biol.">
        <title>MKS and NPHP modules cooperate to establish basal body/transition zone membrane associations and ciliary gate function during ciliogenesis.</title>
        <authorList>
            <person name="Williams C.L."/>
            <person name="Li C."/>
            <person name="Kida K."/>
            <person name="Inglis P.N."/>
            <person name="Mohan S."/>
            <person name="Semenec L."/>
            <person name="Bialas N.J."/>
            <person name="Stupay R.M."/>
            <person name="Chen N."/>
            <person name="Blacque O.E."/>
            <person name="Yoder B.K."/>
            <person name="Leroux M.R."/>
        </authorList>
    </citation>
    <scope>FUNCTION</scope>
    <scope>TISSUE SPECIFICITY</scope>
    <scope>DISRUPTION PHENOTYPE</scope>
</reference>
<dbReference type="EMBL" id="Z46791">
    <property type="protein sequence ID" value="CAR97804.2"/>
    <property type="molecule type" value="Genomic_DNA"/>
</dbReference>
<dbReference type="EMBL" id="Z46792">
    <property type="protein sequence ID" value="CAR97804.2"/>
    <property type="status" value="JOINED"/>
    <property type="molecule type" value="Genomic_DNA"/>
</dbReference>
<dbReference type="EMBL" id="Z46791">
    <property type="protein sequence ID" value="CAR97805.1"/>
    <property type="molecule type" value="Genomic_DNA"/>
</dbReference>
<dbReference type="EMBL" id="Z46792">
    <property type="protein sequence ID" value="CAR97805.1"/>
    <property type="status" value="JOINED"/>
    <property type="molecule type" value="Genomic_DNA"/>
</dbReference>
<dbReference type="PIR" id="T19148">
    <property type="entry name" value="T19148"/>
</dbReference>
<dbReference type="PIR" id="T20144">
    <property type="entry name" value="T20144"/>
</dbReference>
<dbReference type="RefSeq" id="NP_001254260.1">
    <molecule id="Q09459-1"/>
    <property type="nucleotide sequence ID" value="NM_001267331.3"/>
</dbReference>
<dbReference type="RefSeq" id="NP_001254261.1">
    <molecule id="Q09459-2"/>
    <property type="nucleotide sequence ID" value="NM_001267332.3"/>
</dbReference>
<dbReference type="SMR" id="Q09459"/>
<dbReference type="BioGRID" id="39968">
    <property type="interactions" value="1"/>
</dbReference>
<dbReference type="FunCoup" id="Q09459">
    <property type="interactions" value="1231"/>
</dbReference>
<dbReference type="STRING" id="6239.C09G5.8a.1"/>
<dbReference type="PaxDb" id="6239-C09G5.8a"/>
<dbReference type="EnsemblMetazoa" id="C09G5.8a.1">
    <molecule id="Q09459-1"/>
    <property type="protein sequence ID" value="C09G5.8a.1"/>
    <property type="gene ID" value="WBGene00007490"/>
</dbReference>
<dbReference type="EnsemblMetazoa" id="C09G5.8b.1">
    <molecule id="Q09459-2"/>
    <property type="protein sequence ID" value="C09G5.8b.1"/>
    <property type="gene ID" value="WBGene00007490"/>
</dbReference>
<dbReference type="GeneID" id="174654"/>
<dbReference type="KEGG" id="cel:CELE_C09G5.8"/>
<dbReference type="UCSC" id="C09G5.8">
    <molecule id="Q09459-1"/>
    <property type="organism name" value="c. elegans"/>
</dbReference>
<dbReference type="AGR" id="WB:WBGene00007490"/>
<dbReference type="CTD" id="174654"/>
<dbReference type="WormBase" id="C09G5.8a">
    <molecule id="Q09459-1"/>
    <property type="protein sequence ID" value="CE46403"/>
    <property type="gene ID" value="WBGene00007490"/>
    <property type="gene designation" value="mks-5"/>
</dbReference>
<dbReference type="WormBase" id="C09G5.8b">
    <molecule id="Q09459-2"/>
    <property type="protein sequence ID" value="CE43165"/>
    <property type="gene ID" value="WBGene00007490"/>
    <property type="gene designation" value="mks-5"/>
</dbReference>
<dbReference type="eggNOG" id="ENOG502QSQG">
    <property type="taxonomic scope" value="Eukaryota"/>
</dbReference>
<dbReference type="GeneTree" id="ENSGT00520000055620"/>
<dbReference type="HOGENOM" id="CLU_259778_0_0_1"/>
<dbReference type="InParanoid" id="Q09459"/>
<dbReference type="OMA" id="IEMYRPA"/>
<dbReference type="OrthoDB" id="2133912at2759"/>
<dbReference type="PRO" id="PR:Q09459"/>
<dbReference type="Proteomes" id="UP000001940">
    <property type="component" value="Chromosome II"/>
</dbReference>
<dbReference type="Bgee" id="WBGene00007490">
    <property type="expression patterns" value="Expressed in pharyngeal muscle cell (C elegans) and 3 other cell types or tissues"/>
</dbReference>
<dbReference type="GO" id="GO:0036064">
    <property type="term" value="C:ciliary basal body"/>
    <property type="evidence" value="ECO:0000314"/>
    <property type="project" value="UniProtKB"/>
</dbReference>
<dbReference type="GO" id="GO:0035869">
    <property type="term" value="C:ciliary transition zone"/>
    <property type="evidence" value="ECO:0000314"/>
    <property type="project" value="UniProtKB"/>
</dbReference>
<dbReference type="GO" id="GO:0006935">
    <property type="term" value="P:chemotaxis"/>
    <property type="evidence" value="ECO:0000315"/>
    <property type="project" value="UniProtKB"/>
</dbReference>
<dbReference type="GO" id="GO:0060271">
    <property type="term" value="P:cilium assembly"/>
    <property type="evidence" value="ECO:0000315"/>
    <property type="project" value="UniProtKB"/>
</dbReference>
<dbReference type="GO" id="GO:1905515">
    <property type="term" value="P:non-motile cilium assembly"/>
    <property type="evidence" value="ECO:0000315"/>
    <property type="project" value="WormBase"/>
</dbReference>
<dbReference type="GO" id="GO:1904491">
    <property type="term" value="P:protein localization to ciliary transition zone"/>
    <property type="evidence" value="ECO:0000315"/>
    <property type="project" value="WormBase"/>
</dbReference>
<dbReference type="GO" id="GO:0022615">
    <property type="term" value="P:protein to membrane docking"/>
    <property type="evidence" value="ECO:0000315"/>
    <property type="project" value="UniProtKB"/>
</dbReference>
<dbReference type="GO" id="GO:0097500">
    <property type="term" value="P:receptor localization to non-motile cilium"/>
    <property type="evidence" value="ECO:0000315"/>
    <property type="project" value="WormBase"/>
</dbReference>
<dbReference type="Gene3D" id="2.60.40.150">
    <property type="entry name" value="C2 domain"/>
    <property type="match status" value="1"/>
</dbReference>
<dbReference type="InterPro" id="IPR021656">
    <property type="entry name" value="C2-C2_1"/>
</dbReference>
<dbReference type="InterPro" id="IPR035892">
    <property type="entry name" value="C2_domain_sf"/>
</dbReference>
<dbReference type="InterPro" id="IPR031139">
    <property type="entry name" value="RPGRIP1_fam"/>
</dbReference>
<dbReference type="PANTHER" id="PTHR14240:SF1">
    <property type="entry name" value="PROTEIN FANTOM-RELATED"/>
    <property type="match status" value="1"/>
</dbReference>
<dbReference type="PANTHER" id="PTHR14240">
    <property type="entry name" value="RETINITIS PIGMENTOSA GTPASE REGULATOR-INTERACTING PROTEIN"/>
    <property type="match status" value="1"/>
</dbReference>
<dbReference type="Pfam" id="PF11618">
    <property type="entry name" value="C2-C2_1"/>
    <property type="match status" value="1"/>
</dbReference>
<dbReference type="SUPFAM" id="SSF49562">
    <property type="entry name" value="C2 domain (Calcium/lipid-binding domain, CaLB)"/>
    <property type="match status" value="1"/>
</dbReference>
<keyword id="KW-0025">Alternative splicing</keyword>
<keyword id="KW-0966">Cell projection</keyword>
<keyword id="KW-0969">Cilium</keyword>
<keyword id="KW-0970">Cilium biogenesis/degradation</keyword>
<keyword id="KW-0175">Coiled coil</keyword>
<keyword id="KW-1185">Reference proteome</keyword>
<keyword id="KW-0732">Signal</keyword>
<sequence length="1322" mass="150456">MVSARYPIEKWSRPQLEDHFHNVVEELNKAQKKVKEQEKQITTFNSRFRRSMLERKSQNEKVVERSKYDDVVKENQILDMKLKAAKQQLLIYTAPSARATTASMMTGRSTFRQPPSTFRQRPPLTAGTTGSIDRPGSAPVARKKSDGGEKLQLATDEKLAIVRLNRTLKNKNDEITELKYTIEKLRQLKSSVNQSSPPTRLSTSSSSKSSSSNNNNDGEGKDSELEEMSEMSDDESGRSTPVIEEKKKPRRKSRKSSHQEPSKNPIPPPRIPDQTEKVLLDKLKVAENDLAMLQEECDLVKKANERLVHQSLSKSTEYGARESIEEKKKIVELEELLKETEKRIKESEHRRREDQKKFEAMRLHYKNKYDAAKKTEKKLSVVAKNSKVEEERIEEEKISHSPPPMTFEPIRKRHSQSEISRMRRADDDLLQKLYKEVADILHSHDVGIAEINTLGASENSLARWQKLYSELYEELEKVRNMLLIQYDINQKQMKEIKLLKDELDRLKTVSAEILSKSREEVEERQKKIFMLEEQIRTIAYSGQQPVKLLANQINIPTPRVNTDLSVKLINVKPSPSLTSKFFFSLEFFDFQLETTPIMDAKQHNMDFTTVYDVLVSNLLIHYLQTNGIVIEMYRPASDCYKLLAAATISLIPLFEDSVLRKFCSEIMLKSVDTGVEMCTLRYEIEVSQPISDSFKKFKKSEMARNMLPLQLENEDTEDTNFDPLTIMVNRVVGLDTFGKDPSTEFCIVDEFLSFSPYFTDFSTSSEIRSKRDCYIPKIDIARNLFATSSISFFLIENIPRQDGVIATLHLPLHPLCKLGGSIKGTFPMLDTDGRPSSVSLDLCLIWKHEIPSFFLKHEPKEPLKEVKDTPILPQPVRRTSKEFVVTPVKEAELHDAEPTSMPPKAPEPTTAPLRRLSTDSSDTSFSHSSKDLFSPPTNPQTYDYEIPAVTPALVDSDGEEEADRIVFDDDDDEIESVSAVSSQRDPEPLEVPERQVENLPSPEDTPRPSDPLKPNGTNESKESTPVTQRSVDKTDDVAPVDPELEPESGPEPEPVVESEPNEVAETEEDRKRELKTEELKSLLGALPPIAKPRNIPVGPIALTEQPEATRQQGSTGRILFTDPLHFSVPPSESSSTSSPRRAEKAPVPLPDYEGHSLIKVRKPLSPTDKDVLEPNMKVSIQLETFELVPGSSLTPLTREETTFFVDWVFLDFTNEQSKSTIFDFPRRPQEMVDIRYTKEYTLTRGQLSLLDQWIRASIKFELTIIKISPGDEEELGFGSLILVPNNTQNKSFVIDVYDRSGIVQAEMTLTLHFSRALIEQLT</sequence>
<proteinExistence type="evidence at transcript level"/>
<protein>
    <recommendedName>
        <fullName>Protein fantom</fullName>
    </recommendedName>
    <alternativeName>
        <fullName>Meckel syndrome protein homolog</fullName>
    </alternativeName>
</protein>
<organism>
    <name type="scientific">Caenorhabditis elegans</name>
    <dbReference type="NCBI Taxonomy" id="6239"/>
    <lineage>
        <taxon>Eukaryota</taxon>
        <taxon>Metazoa</taxon>
        <taxon>Ecdysozoa</taxon>
        <taxon>Nematoda</taxon>
        <taxon>Chromadorea</taxon>
        <taxon>Rhabditida</taxon>
        <taxon>Rhabditina</taxon>
        <taxon>Rhabditomorpha</taxon>
        <taxon>Rhabditoidea</taxon>
        <taxon>Rhabditidae</taxon>
        <taxon>Peloderinae</taxon>
        <taxon>Caenorhabditis</taxon>
    </lineage>
</organism>
<name>FTM_CAEEL</name>
<feature type="signal peptide" evidence="1">
    <location>
        <begin position="1"/>
        <end position="22"/>
    </location>
</feature>
<feature type="chain" id="PRO_0000065173" description="Protein fantom">
    <location>
        <begin position="23"/>
        <end position="1322"/>
    </location>
</feature>
<feature type="region of interest" description="Disordered" evidence="2">
    <location>
        <begin position="108"/>
        <end position="151"/>
    </location>
</feature>
<feature type="region of interest" description="Disordered" evidence="2">
    <location>
        <begin position="189"/>
        <end position="275"/>
    </location>
</feature>
<feature type="region of interest" description="Disordered" evidence="2">
    <location>
        <begin position="392"/>
        <end position="418"/>
    </location>
</feature>
<feature type="region of interest" description="Disordered" evidence="2">
    <location>
        <begin position="891"/>
        <end position="1094"/>
    </location>
</feature>
<feature type="region of interest" description="Disordered" evidence="2">
    <location>
        <begin position="1121"/>
        <end position="1149"/>
    </location>
</feature>
<feature type="coiled-coil region" evidence="1">
    <location>
        <begin position="15"/>
        <end position="89"/>
    </location>
</feature>
<feature type="coiled-coil region" evidence="1">
    <location>
        <begin position="274"/>
        <end position="362"/>
    </location>
</feature>
<feature type="coiled-coil region" evidence="1">
    <location>
        <begin position="456"/>
        <end position="538"/>
    </location>
</feature>
<feature type="compositionally biased region" description="Polar residues" evidence="2">
    <location>
        <begin position="108"/>
        <end position="119"/>
    </location>
</feature>
<feature type="compositionally biased region" description="Low complexity" evidence="2">
    <location>
        <begin position="195"/>
        <end position="217"/>
    </location>
</feature>
<feature type="compositionally biased region" description="Acidic residues" evidence="2">
    <location>
        <begin position="224"/>
        <end position="234"/>
    </location>
</feature>
<feature type="compositionally biased region" description="Low complexity" evidence="2">
    <location>
        <begin position="918"/>
        <end position="927"/>
    </location>
</feature>
<feature type="compositionally biased region" description="Acidic residues" evidence="2">
    <location>
        <begin position="956"/>
        <end position="975"/>
    </location>
</feature>
<feature type="compositionally biased region" description="Basic and acidic residues" evidence="2">
    <location>
        <begin position="984"/>
        <end position="996"/>
    </location>
</feature>
<feature type="compositionally biased region" description="Polar residues" evidence="2">
    <location>
        <begin position="1015"/>
        <end position="1029"/>
    </location>
</feature>
<feature type="compositionally biased region" description="Acidic residues" evidence="2">
    <location>
        <begin position="1042"/>
        <end position="1067"/>
    </location>
</feature>
<feature type="compositionally biased region" description="Basic and acidic residues" evidence="2">
    <location>
        <begin position="1068"/>
        <end position="1080"/>
    </location>
</feature>
<feature type="compositionally biased region" description="Low complexity" evidence="2">
    <location>
        <begin position="1127"/>
        <end position="1139"/>
    </location>
</feature>
<feature type="splice variant" id="VSP_038153" description="In isoform b." evidence="5">
    <location>
        <begin position="1"/>
        <end position="230"/>
    </location>
</feature>
<evidence type="ECO:0000255" key="1"/>
<evidence type="ECO:0000256" key="2">
    <source>
        <dbReference type="SAM" id="MobiDB-lite"/>
    </source>
</evidence>
<evidence type="ECO:0000269" key="3">
    <source>
    </source>
</evidence>
<evidence type="ECO:0000269" key="4">
    <source>
    </source>
</evidence>
<evidence type="ECO:0000305" key="5"/>
<gene>
    <name type="primary">mks-5</name>
    <name type="synonym">ftm</name>
    <name type="synonym">nphp-8</name>
    <name type="ORF">C09G5.8</name>
</gene>